<accession>Q6MJ29</accession>
<dbReference type="EMBL" id="BX842654">
    <property type="protein sequence ID" value="CAE80733.1"/>
    <property type="molecule type" value="Genomic_DNA"/>
</dbReference>
<dbReference type="RefSeq" id="WP_011165337.1">
    <property type="nucleotide sequence ID" value="NC_005363.1"/>
</dbReference>
<dbReference type="SMR" id="Q6MJ29"/>
<dbReference type="STRING" id="264462.Bd2958"/>
<dbReference type="GeneID" id="93013823"/>
<dbReference type="KEGG" id="bba:Bd2958"/>
<dbReference type="eggNOG" id="COG0098">
    <property type="taxonomic scope" value="Bacteria"/>
</dbReference>
<dbReference type="HOGENOM" id="CLU_065898_2_2_7"/>
<dbReference type="Proteomes" id="UP000008080">
    <property type="component" value="Chromosome"/>
</dbReference>
<dbReference type="GO" id="GO:0015935">
    <property type="term" value="C:small ribosomal subunit"/>
    <property type="evidence" value="ECO:0007669"/>
    <property type="project" value="InterPro"/>
</dbReference>
<dbReference type="GO" id="GO:0019843">
    <property type="term" value="F:rRNA binding"/>
    <property type="evidence" value="ECO:0007669"/>
    <property type="project" value="UniProtKB-UniRule"/>
</dbReference>
<dbReference type="GO" id="GO:0003735">
    <property type="term" value="F:structural constituent of ribosome"/>
    <property type="evidence" value="ECO:0007669"/>
    <property type="project" value="InterPro"/>
</dbReference>
<dbReference type="GO" id="GO:0006412">
    <property type="term" value="P:translation"/>
    <property type="evidence" value="ECO:0007669"/>
    <property type="project" value="UniProtKB-UniRule"/>
</dbReference>
<dbReference type="FunFam" id="3.30.160.20:FF:000001">
    <property type="entry name" value="30S ribosomal protein S5"/>
    <property type="match status" value="1"/>
</dbReference>
<dbReference type="FunFam" id="3.30.230.10:FF:000002">
    <property type="entry name" value="30S ribosomal protein S5"/>
    <property type="match status" value="1"/>
</dbReference>
<dbReference type="Gene3D" id="3.30.160.20">
    <property type="match status" value="1"/>
</dbReference>
<dbReference type="Gene3D" id="3.30.230.10">
    <property type="match status" value="1"/>
</dbReference>
<dbReference type="HAMAP" id="MF_01307_B">
    <property type="entry name" value="Ribosomal_uS5_B"/>
    <property type="match status" value="1"/>
</dbReference>
<dbReference type="InterPro" id="IPR020568">
    <property type="entry name" value="Ribosomal_Su5_D2-typ_SF"/>
</dbReference>
<dbReference type="InterPro" id="IPR000851">
    <property type="entry name" value="Ribosomal_uS5"/>
</dbReference>
<dbReference type="InterPro" id="IPR005712">
    <property type="entry name" value="Ribosomal_uS5_bac-type"/>
</dbReference>
<dbReference type="InterPro" id="IPR005324">
    <property type="entry name" value="Ribosomal_uS5_C"/>
</dbReference>
<dbReference type="InterPro" id="IPR013810">
    <property type="entry name" value="Ribosomal_uS5_N"/>
</dbReference>
<dbReference type="InterPro" id="IPR018192">
    <property type="entry name" value="Ribosomal_uS5_N_CS"/>
</dbReference>
<dbReference type="InterPro" id="IPR014721">
    <property type="entry name" value="Ribsml_uS5_D2-typ_fold_subgr"/>
</dbReference>
<dbReference type="NCBIfam" id="TIGR01021">
    <property type="entry name" value="rpsE_bact"/>
    <property type="match status" value="1"/>
</dbReference>
<dbReference type="PANTHER" id="PTHR48277">
    <property type="entry name" value="MITOCHONDRIAL RIBOSOMAL PROTEIN S5"/>
    <property type="match status" value="1"/>
</dbReference>
<dbReference type="PANTHER" id="PTHR48277:SF1">
    <property type="entry name" value="MITOCHONDRIAL RIBOSOMAL PROTEIN S5"/>
    <property type="match status" value="1"/>
</dbReference>
<dbReference type="Pfam" id="PF00333">
    <property type="entry name" value="Ribosomal_S5"/>
    <property type="match status" value="1"/>
</dbReference>
<dbReference type="Pfam" id="PF03719">
    <property type="entry name" value="Ribosomal_S5_C"/>
    <property type="match status" value="1"/>
</dbReference>
<dbReference type="SUPFAM" id="SSF54768">
    <property type="entry name" value="dsRNA-binding domain-like"/>
    <property type="match status" value="1"/>
</dbReference>
<dbReference type="SUPFAM" id="SSF54211">
    <property type="entry name" value="Ribosomal protein S5 domain 2-like"/>
    <property type="match status" value="1"/>
</dbReference>
<dbReference type="PROSITE" id="PS00585">
    <property type="entry name" value="RIBOSOMAL_S5"/>
    <property type="match status" value="1"/>
</dbReference>
<dbReference type="PROSITE" id="PS50881">
    <property type="entry name" value="S5_DSRBD"/>
    <property type="match status" value="1"/>
</dbReference>
<comment type="function">
    <text evidence="1">With S4 and S12 plays an important role in translational accuracy.</text>
</comment>
<comment type="function">
    <text evidence="1">Located at the back of the 30S subunit body where it stabilizes the conformation of the head with respect to the body.</text>
</comment>
<comment type="subunit">
    <text evidence="1">Part of the 30S ribosomal subunit. Contacts proteins S4 and S8.</text>
</comment>
<comment type="domain">
    <text>The N-terminal domain interacts with the head of the 30S subunit; the C-terminal domain interacts with the body and contacts protein S4. The interaction surface between S4 and S5 is involved in control of translational fidelity.</text>
</comment>
<comment type="similarity">
    <text evidence="1">Belongs to the universal ribosomal protein uS5 family.</text>
</comment>
<feature type="chain" id="PRO_0000131474" description="Small ribosomal subunit protein uS5">
    <location>
        <begin position="1"/>
        <end position="152"/>
    </location>
</feature>
<feature type="domain" description="S5 DRBM" evidence="1">
    <location>
        <begin position="11"/>
        <end position="74"/>
    </location>
</feature>
<evidence type="ECO:0000255" key="1">
    <source>
        <dbReference type="HAMAP-Rule" id="MF_01307"/>
    </source>
</evidence>
<evidence type="ECO:0000305" key="2"/>
<organism>
    <name type="scientific">Bdellovibrio bacteriovorus (strain ATCC 15356 / DSM 50701 / NCIMB 9529 / HD100)</name>
    <dbReference type="NCBI Taxonomy" id="264462"/>
    <lineage>
        <taxon>Bacteria</taxon>
        <taxon>Pseudomonadati</taxon>
        <taxon>Bdellovibrionota</taxon>
        <taxon>Bdellovibrionia</taxon>
        <taxon>Bdellovibrionales</taxon>
        <taxon>Pseudobdellovibrionaceae</taxon>
        <taxon>Bdellovibrio</taxon>
    </lineage>
</organism>
<proteinExistence type="inferred from homology"/>
<gene>
    <name evidence="1" type="primary">rpsE</name>
    <name type="ordered locus">Bd2958</name>
</gene>
<keyword id="KW-1185">Reference proteome</keyword>
<keyword id="KW-0687">Ribonucleoprotein</keyword>
<keyword id="KW-0689">Ribosomal protein</keyword>
<keyword id="KW-0694">RNA-binding</keyword>
<keyword id="KW-0699">rRNA-binding</keyword>
<name>RS5_BDEBA</name>
<reference key="1">
    <citation type="journal article" date="2004" name="Science">
        <title>A predator unmasked: life cycle of Bdellovibrio bacteriovorus from a genomic perspective.</title>
        <authorList>
            <person name="Rendulic S."/>
            <person name="Jagtap P."/>
            <person name="Rosinus A."/>
            <person name="Eppinger M."/>
            <person name="Baar C."/>
            <person name="Lanz C."/>
            <person name="Keller H."/>
            <person name="Lambert C."/>
            <person name="Evans K.J."/>
            <person name="Goesmann A."/>
            <person name="Meyer F."/>
            <person name="Sockett R.E."/>
            <person name="Schuster S.C."/>
        </authorList>
    </citation>
    <scope>NUCLEOTIDE SEQUENCE [LARGE SCALE GENOMIC DNA]</scope>
    <source>
        <strain>ATCC 15356 / DSM 50701 / NCIMB 9529 / HD100</strain>
    </source>
</reference>
<protein>
    <recommendedName>
        <fullName evidence="1">Small ribosomal subunit protein uS5</fullName>
    </recommendedName>
    <alternativeName>
        <fullName evidence="2">30S ribosomal protein S5</fullName>
    </alternativeName>
</protein>
<sequence>MEKVQAQAAELEERVVAINRVTKVVKGGRRFSFAALVVVGNKAGDVGFGSGKAGEVPEAIGKASRSAKKSAKSVALKEGRTIPHEVIGKFGAAKVIMKPAAPGTGVIAGGAVRAVLESVGVKDILTKCVGTRNPHNAVRATIDGLKQLKQQL</sequence>